<reference key="1">
    <citation type="journal article" date="2008" name="BMC Genomics">
        <title>The genome of Aeromonas salmonicida subsp. salmonicida A449: insights into the evolution of a fish pathogen.</title>
        <authorList>
            <person name="Reith M.E."/>
            <person name="Singh R.K."/>
            <person name="Curtis B."/>
            <person name="Boyd J.M."/>
            <person name="Bouevitch A."/>
            <person name="Kimball J."/>
            <person name="Munholland J."/>
            <person name="Murphy C."/>
            <person name="Sarty D."/>
            <person name="Williams J."/>
            <person name="Nash J.H."/>
            <person name="Johnson S.C."/>
            <person name="Brown L.L."/>
        </authorList>
    </citation>
    <scope>NUCLEOTIDE SEQUENCE [LARGE SCALE GENOMIC DNA]</scope>
    <source>
        <strain>A449</strain>
    </source>
</reference>
<sequence>MIREERLLKVLKAPHISEKSTMVAEKQNTIVFKIAVDATKAEVKAAVAKLFEVEVETVRTLNMKGKTKRSGARVGRRSDWKKAYVTLKAGQDIDFMGAAE</sequence>
<organism>
    <name type="scientific">Aeromonas salmonicida (strain A449)</name>
    <dbReference type="NCBI Taxonomy" id="382245"/>
    <lineage>
        <taxon>Bacteria</taxon>
        <taxon>Pseudomonadati</taxon>
        <taxon>Pseudomonadota</taxon>
        <taxon>Gammaproteobacteria</taxon>
        <taxon>Aeromonadales</taxon>
        <taxon>Aeromonadaceae</taxon>
        <taxon>Aeromonas</taxon>
    </lineage>
</organism>
<accession>A4ST04</accession>
<proteinExistence type="inferred from homology"/>
<keyword id="KW-0687">Ribonucleoprotein</keyword>
<keyword id="KW-0689">Ribosomal protein</keyword>
<keyword id="KW-0694">RNA-binding</keyword>
<keyword id="KW-0699">rRNA-binding</keyword>
<gene>
    <name evidence="1" type="primary">rplW</name>
    <name type="ordered locus">ASA_4085</name>
</gene>
<feature type="chain" id="PRO_1000068034" description="Large ribosomal subunit protein uL23">
    <location>
        <begin position="1"/>
        <end position="100"/>
    </location>
</feature>
<protein>
    <recommendedName>
        <fullName evidence="1">Large ribosomal subunit protein uL23</fullName>
    </recommendedName>
    <alternativeName>
        <fullName evidence="2">50S ribosomal protein L23</fullName>
    </alternativeName>
</protein>
<name>RL23_AERS4</name>
<dbReference type="EMBL" id="CP000644">
    <property type="protein sequence ID" value="ABO92026.1"/>
    <property type="molecule type" value="Genomic_DNA"/>
</dbReference>
<dbReference type="RefSeq" id="WP_005319747.1">
    <property type="nucleotide sequence ID" value="NC_009348.1"/>
</dbReference>
<dbReference type="SMR" id="A4ST04"/>
<dbReference type="STRING" id="29491.GCA_000820065_03467"/>
<dbReference type="GeneID" id="79877768"/>
<dbReference type="KEGG" id="asa:ASA_4085"/>
<dbReference type="eggNOG" id="COG0089">
    <property type="taxonomic scope" value="Bacteria"/>
</dbReference>
<dbReference type="HOGENOM" id="CLU_037562_3_1_6"/>
<dbReference type="Proteomes" id="UP000000225">
    <property type="component" value="Chromosome"/>
</dbReference>
<dbReference type="GO" id="GO:1990904">
    <property type="term" value="C:ribonucleoprotein complex"/>
    <property type="evidence" value="ECO:0007669"/>
    <property type="project" value="UniProtKB-KW"/>
</dbReference>
<dbReference type="GO" id="GO:0005840">
    <property type="term" value="C:ribosome"/>
    <property type="evidence" value="ECO:0007669"/>
    <property type="project" value="UniProtKB-KW"/>
</dbReference>
<dbReference type="GO" id="GO:0019843">
    <property type="term" value="F:rRNA binding"/>
    <property type="evidence" value="ECO:0007669"/>
    <property type="project" value="UniProtKB-UniRule"/>
</dbReference>
<dbReference type="GO" id="GO:0003735">
    <property type="term" value="F:structural constituent of ribosome"/>
    <property type="evidence" value="ECO:0007669"/>
    <property type="project" value="InterPro"/>
</dbReference>
<dbReference type="GO" id="GO:0006412">
    <property type="term" value="P:translation"/>
    <property type="evidence" value="ECO:0007669"/>
    <property type="project" value="UniProtKB-UniRule"/>
</dbReference>
<dbReference type="FunFam" id="3.30.70.330:FF:000001">
    <property type="entry name" value="50S ribosomal protein L23"/>
    <property type="match status" value="1"/>
</dbReference>
<dbReference type="Gene3D" id="3.30.70.330">
    <property type="match status" value="1"/>
</dbReference>
<dbReference type="HAMAP" id="MF_01369_B">
    <property type="entry name" value="Ribosomal_uL23_B"/>
    <property type="match status" value="1"/>
</dbReference>
<dbReference type="InterPro" id="IPR012677">
    <property type="entry name" value="Nucleotide-bd_a/b_plait_sf"/>
</dbReference>
<dbReference type="InterPro" id="IPR013025">
    <property type="entry name" value="Ribosomal_uL23-like"/>
</dbReference>
<dbReference type="InterPro" id="IPR012678">
    <property type="entry name" value="Ribosomal_uL23/eL15/eS24_sf"/>
</dbReference>
<dbReference type="InterPro" id="IPR001014">
    <property type="entry name" value="Ribosomal_uL23_CS"/>
</dbReference>
<dbReference type="NCBIfam" id="NF004358">
    <property type="entry name" value="PRK05738.1-1"/>
    <property type="match status" value="1"/>
</dbReference>
<dbReference type="NCBIfam" id="NF004359">
    <property type="entry name" value="PRK05738.1-3"/>
    <property type="match status" value="1"/>
</dbReference>
<dbReference type="NCBIfam" id="NF004363">
    <property type="entry name" value="PRK05738.2-4"/>
    <property type="match status" value="1"/>
</dbReference>
<dbReference type="NCBIfam" id="NF004366">
    <property type="entry name" value="PRK05738.3-2"/>
    <property type="match status" value="1"/>
</dbReference>
<dbReference type="PANTHER" id="PTHR11620">
    <property type="entry name" value="60S RIBOSOMAL PROTEIN L23A"/>
    <property type="match status" value="1"/>
</dbReference>
<dbReference type="Pfam" id="PF00276">
    <property type="entry name" value="Ribosomal_L23"/>
    <property type="match status" value="1"/>
</dbReference>
<dbReference type="SUPFAM" id="SSF54189">
    <property type="entry name" value="Ribosomal proteins S24e, L23 and L15e"/>
    <property type="match status" value="1"/>
</dbReference>
<dbReference type="PROSITE" id="PS00050">
    <property type="entry name" value="RIBOSOMAL_L23"/>
    <property type="match status" value="1"/>
</dbReference>
<comment type="function">
    <text evidence="1">One of the early assembly proteins it binds 23S rRNA. One of the proteins that surrounds the polypeptide exit tunnel on the outside of the ribosome. Forms the main docking site for trigger factor binding to the ribosome.</text>
</comment>
<comment type="subunit">
    <text evidence="1">Part of the 50S ribosomal subunit. Contacts protein L29, and trigger factor when it is bound to the ribosome.</text>
</comment>
<comment type="similarity">
    <text evidence="1">Belongs to the universal ribosomal protein uL23 family.</text>
</comment>
<evidence type="ECO:0000255" key="1">
    <source>
        <dbReference type="HAMAP-Rule" id="MF_01369"/>
    </source>
</evidence>
<evidence type="ECO:0000305" key="2"/>